<sequence>MSRLRIFADSNPTTPHFDSRDGEQIATELRKIGVTFERWHASQPVEPGASPEQVMAAYRADIDRISAERGFKTVDVVSIAPDNPKREEMRAKFLDEHFHKEDEVRFFVAGSGLFTLHVDAQVYEIECVKDDLIAVPDSTLHWFDMGPEPHFVAIRFFTEPDGWVGHFTGTEIAKQFPRYAPEKPPKAS</sequence>
<dbReference type="EC" id="1.13.11.54" evidence="1"/>
<dbReference type="EC" id="1.13.11.53" evidence="1"/>
<dbReference type="EMBL" id="CP000050">
    <property type="protein sequence ID" value="AAY49423.1"/>
    <property type="molecule type" value="Genomic_DNA"/>
</dbReference>
<dbReference type="RefSeq" id="WP_011036989.1">
    <property type="nucleotide sequence ID" value="NZ_CP155948.1"/>
</dbReference>
<dbReference type="SMR" id="Q4UU50"/>
<dbReference type="KEGG" id="xcb:XC_2370"/>
<dbReference type="HOGENOM" id="CLU_125400_0_0_6"/>
<dbReference type="UniPathway" id="UPA00904">
    <property type="reaction ID" value="UER00878"/>
</dbReference>
<dbReference type="Proteomes" id="UP000000420">
    <property type="component" value="Chromosome"/>
</dbReference>
<dbReference type="GO" id="GO:0010308">
    <property type="term" value="F:acireductone dioxygenase (Ni2+-requiring) activity"/>
    <property type="evidence" value="ECO:0007669"/>
    <property type="project" value="UniProtKB-UniRule"/>
</dbReference>
<dbReference type="GO" id="GO:0010309">
    <property type="term" value="F:acireductone dioxygenase [iron(II)-requiring] activity"/>
    <property type="evidence" value="ECO:0007669"/>
    <property type="project" value="UniProtKB-UniRule"/>
</dbReference>
<dbReference type="GO" id="GO:0005506">
    <property type="term" value="F:iron ion binding"/>
    <property type="evidence" value="ECO:0007669"/>
    <property type="project" value="UniProtKB-UniRule"/>
</dbReference>
<dbReference type="GO" id="GO:0016151">
    <property type="term" value="F:nickel cation binding"/>
    <property type="evidence" value="ECO:0007669"/>
    <property type="project" value="UniProtKB-UniRule"/>
</dbReference>
<dbReference type="GO" id="GO:0019509">
    <property type="term" value="P:L-methionine salvage from methylthioadenosine"/>
    <property type="evidence" value="ECO:0007669"/>
    <property type="project" value="UniProtKB-UniRule"/>
</dbReference>
<dbReference type="GO" id="GO:0019284">
    <property type="term" value="P:L-methionine salvage from S-adenosylmethionine"/>
    <property type="evidence" value="ECO:0007669"/>
    <property type="project" value="InterPro"/>
</dbReference>
<dbReference type="CDD" id="cd02232">
    <property type="entry name" value="cupin_ARD"/>
    <property type="match status" value="1"/>
</dbReference>
<dbReference type="FunFam" id="2.60.120.10:FF:000056">
    <property type="entry name" value="Acireductone dioxygenase"/>
    <property type="match status" value="1"/>
</dbReference>
<dbReference type="Gene3D" id="2.60.120.10">
    <property type="entry name" value="Jelly Rolls"/>
    <property type="match status" value="1"/>
</dbReference>
<dbReference type="HAMAP" id="MF_01682">
    <property type="entry name" value="Salvage_MtnD"/>
    <property type="match status" value="1"/>
</dbReference>
<dbReference type="InterPro" id="IPR004313">
    <property type="entry name" value="ARD"/>
</dbReference>
<dbReference type="InterPro" id="IPR023956">
    <property type="entry name" value="ARD_bac"/>
</dbReference>
<dbReference type="InterPro" id="IPR014710">
    <property type="entry name" value="RmlC-like_jellyroll"/>
</dbReference>
<dbReference type="InterPro" id="IPR011051">
    <property type="entry name" value="RmlC_Cupin_sf"/>
</dbReference>
<dbReference type="PANTHER" id="PTHR23418">
    <property type="entry name" value="ACIREDUCTONE DIOXYGENASE"/>
    <property type="match status" value="1"/>
</dbReference>
<dbReference type="PANTHER" id="PTHR23418:SF0">
    <property type="entry name" value="ACIREDUCTONE DIOXYGENASE"/>
    <property type="match status" value="1"/>
</dbReference>
<dbReference type="Pfam" id="PF03079">
    <property type="entry name" value="ARD"/>
    <property type="match status" value="1"/>
</dbReference>
<dbReference type="SUPFAM" id="SSF51182">
    <property type="entry name" value="RmlC-like cupins"/>
    <property type="match status" value="1"/>
</dbReference>
<protein>
    <recommendedName>
        <fullName evidence="1">Acireductone dioxygenase</fullName>
    </recommendedName>
    <alternativeName>
        <fullName evidence="1">1,2-dihydroxy-3-keto-5-methylthiopentene dioxygenase</fullName>
        <shortName evidence="1">DHK-MTPene dioxygenase</shortName>
    </alternativeName>
    <alternativeName>
        <fullName evidence="1">Acireductone dioxygenase (Fe(2+)-requiring)</fullName>
        <shortName evidence="1">ARD'</shortName>
        <shortName evidence="1">Fe-ARD</shortName>
        <ecNumber evidence="1">1.13.11.54</ecNumber>
    </alternativeName>
    <alternativeName>
        <fullName evidence="1">Acireductone dioxygenase (Ni(2+)-requiring)</fullName>
        <shortName evidence="1">ARD</shortName>
        <shortName evidence="1">Ni-ARD</shortName>
        <ecNumber evidence="1">1.13.11.53</ecNumber>
    </alternativeName>
</protein>
<accession>Q4UU50</accession>
<organism>
    <name type="scientific">Xanthomonas campestris pv. campestris (strain 8004)</name>
    <dbReference type="NCBI Taxonomy" id="314565"/>
    <lineage>
        <taxon>Bacteria</taxon>
        <taxon>Pseudomonadati</taxon>
        <taxon>Pseudomonadota</taxon>
        <taxon>Gammaproteobacteria</taxon>
        <taxon>Lysobacterales</taxon>
        <taxon>Lysobacteraceae</taxon>
        <taxon>Xanthomonas</taxon>
    </lineage>
</organism>
<reference key="1">
    <citation type="journal article" date="2005" name="Genome Res.">
        <title>Comparative and functional genomic analyses of the pathogenicity of phytopathogen Xanthomonas campestris pv. campestris.</title>
        <authorList>
            <person name="Qian W."/>
            <person name="Jia Y."/>
            <person name="Ren S.-X."/>
            <person name="He Y.-Q."/>
            <person name="Feng J.-X."/>
            <person name="Lu L.-F."/>
            <person name="Sun Q."/>
            <person name="Ying G."/>
            <person name="Tang D.-J."/>
            <person name="Tang H."/>
            <person name="Wu W."/>
            <person name="Hao P."/>
            <person name="Wang L."/>
            <person name="Jiang B.-L."/>
            <person name="Zeng S."/>
            <person name="Gu W.-Y."/>
            <person name="Lu G."/>
            <person name="Rong L."/>
            <person name="Tian Y."/>
            <person name="Yao Z."/>
            <person name="Fu G."/>
            <person name="Chen B."/>
            <person name="Fang R."/>
            <person name="Qiang B."/>
            <person name="Chen Z."/>
            <person name="Zhao G.-P."/>
            <person name="Tang J.-L."/>
            <person name="He C."/>
        </authorList>
    </citation>
    <scope>NUCLEOTIDE SEQUENCE [LARGE SCALE GENOMIC DNA]</scope>
    <source>
        <strain>8004</strain>
    </source>
</reference>
<keyword id="KW-0028">Amino-acid biosynthesis</keyword>
<keyword id="KW-0223">Dioxygenase</keyword>
<keyword id="KW-0408">Iron</keyword>
<keyword id="KW-0479">Metal-binding</keyword>
<keyword id="KW-0486">Methionine biosynthesis</keyword>
<keyword id="KW-0533">Nickel</keyword>
<keyword id="KW-0560">Oxidoreductase</keyword>
<proteinExistence type="inferred from homology"/>
<name>MTND_XANC8</name>
<evidence type="ECO:0000255" key="1">
    <source>
        <dbReference type="HAMAP-Rule" id="MF_01682"/>
    </source>
</evidence>
<evidence type="ECO:0000256" key="2">
    <source>
        <dbReference type="SAM" id="MobiDB-lite"/>
    </source>
</evidence>
<feature type="chain" id="PRO_0000359248" description="Acireductone dioxygenase">
    <location>
        <begin position="1"/>
        <end position="188"/>
    </location>
</feature>
<feature type="region of interest" description="Disordered" evidence="2">
    <location>
        <begin position="1"/>
        <end position="20"/>
    </location>
</feature>
<feature type="binding site" evidence="1">
    <location>
        <position position="97"/>
    </location>
    <ligand>
        <name>Fe(2+)</name>
        <dbReference type="ChEBI" id="CHEBI:29033"/>
    </ligand>
</feature>
<feature type="binding site" evidence="1">
    <location>
        <position position="97"/>
    </location>
    <ligand>
        <name>Ni(2+)</name>
        <dbReference type="ChEBI" id="CHEBI:49786"/>
    </ligand>
</feature>
<feature type="binding site" evidence="1">
    <location>
        <position position="99"/>
    </location>
    <ligand>
        <name>Fe(2+)</name>
        <dbReference type="ChEBI" id="CHEBI:29033"/>
    </ligand>
</feature>
<feature type="binding site" evidence="1">
    <location>
        <position position="99"/>
    </location>
    <ligand>
        <name>Ni(2+)</name>
        <dbReference type="ChEBI" id="CHEBI:49786"/>
    </ligand>
</feature>
<feature type="binding site" evidence="1">
    <location>
        <position position="103"/>
    </location>
    <ligand>
        <name>Fe(2+)</name>
        <dbReference type="ChEBI" id="CHEBI:29033"/>
    </ligand>
</feature>
<feature type="binding site" evidence="1">
    <location>
        <position position="103"/>
    </location>
    <ligand>
        <name>Ni(2+)</name>
        <dbReference type="ChEBI" id="CHEBI:49786"/>
    </ligand>
</feature>
<feature type="binding site" evidence="1">
    <location>
        <position position="141"/>
    </location>
    <ligand>
        <name>Fe(2+)</name>
        <dbReference type="ChEBI" id="CHEBI:29033"/>
    </ligand>
</feature>
<feature type="binding site" evidence="1">
    <location>
        <position position="141"/>
    </location>
    <ligand>
        <name>Ni(2+)</name>
        <dbReference type="ChEBI" id="CHEBI:49786"/>
    </ligand>
</feature>
<feature type="site" description="May play a role in metal incorporation in vivo" evidence="1">
    <location>
        <position position="96"/>
    </location>
</feature>
<feature type="site" description="May play a role in transmitting local conformational changes" evidence="1">
    <location>
        <position position="102"/>
    </location>
</feature>
<feature type="site" description="Important to generate the dianion" evidence="1">
    <location>
        <position position="105"/>
    </location>
</feature>
<comment type="function">
    <text evidence="1">Catalyzes 2 different reactions between oxygen and the acireductone 1,2-dihydroxy-3-keto-5-methylthiopentene (DHK-MTPene) depending upon the metal bound in the active site. Fe-containing acireductone dioxygenase (Fe-ARD) produces formate and 2-keto-4-methylthiobutyrate (KMTB), the alpha-ketoacid precursor of methionine in the methionine recycle pathway. Ni-containing acireductone dioxygenase (Ni-ARD) produces methylthiopropionate, carbon monoxide and formate, and does not lie on the methionine recycle pathway.</text>
</comment>
<comment type="catalytic activity">
    <reaction evidence="1">
        <text>1,2-dihydroxy-5-(methylsulfanyl)pent-1-en-3-one + O2 = 3-(methylsulfanyl)propanoate + CO + formate + 2 H(+)</text>
        <dbReference type="Rhea" id="RHEA:14161"/>
        <dbReference type="ChEBI" id="CHEBI:15378"/>
        <dbReference type="ChEBI" id="CHEBI:15379"/>
        <dbReference type="ChEBI" id="CHEBI:15740"/>
        <dbReference type="ChEBI" id="CHEBI:17245"/>
        <dbReference type="ChEBI" id="CHEBI:49016"/>
        <dbReference type="ChEBI" id="CHEBI:49252"/>
        <dbReference type="EC" id="1.13.11.53"/>
    </reaction>
</comment>
<comment type="catalytic activity">
    <reaction evidence="1">
        <text>1,2-dihydroxy-5-(methylsulfanyl)pent-1-en-3-one + O2 = 4-methylsulfanyl-2-oxobutanoate + formate + 2 H(+)</text>
        <dbReference type="Rhea" id="RHEA:24504"/>
        <dbReference type="ChEBI" id="CHEBI:15378"/>
        <dbReference type="ChEBI" id="CHEBI:15379"/>
        <dbReference type="ChEBI" id="CHEBI:15740"/>
        <dbReference type="ChEBI" id="CHEBI:16723"/>
        <dbReference type="ChEBI" id="CHEBI:49252"/>
        <dbReference type="EC" id="1.13.11.54"/>
    </reaction>
</comment>
<comment type="cofactor">
    <cofactor evidence="1">
        <name>Fe(2+)</name>
        <dbReference type="ChEBI" id="CHEBI:29033"/>
    </cofactor>
    <text evidence="1">Binds 1 Fe(2+) cation per monomer.</text>
</comment>
<comment type="cofactor">
    <cofactor evidence="1">
        <name>Ni(2+)</name>
        <dbReference type="ChEBI" id="CHEBI:49786"/>
    </cofactor>
    <text evidence="1">Binds 1 nickel ion per monomer.</text>
</comment>
<comment type="pathway">
    <text evidence="1">Amino-acid biosynthesis; L-methionine biosynthesis via salvage pathway; L-methionine from S-methyl-5-thio-alpha-D-ribose 1-phosphate: step 5/6.</text>
</comment>
<comment type="subunit">
    <text evidence="1">Monomer.</text>
</comment>
<comment type="similarity">
    <text evidence="1">Belongs to the acireductone dioxygenase (ARD) family.</text>
</comment>
<gene>
    <name evidence="1" type="primary">mtnD</name>
    <name type="ordered locus">XC_2370</name>
</gene>